<reference key="1">
    <citation type="journal article" date="2014" name="Stand. Genomic Sci.">
        <title>Complete genome sequence of Anabaena variabilis ATCC 29413.</title>
        <authorList>
            <person name="Thiel T."/>
            <person name="Pratte B.S."/>
            <person name="Zhong J."/>
            <person name="Goodwin L."/>
            <person name="Copeland A."/>
            <person name="Lucas S."/>
            <person name="Han C."/>
            <person name="Pitluck S."/>
            <person name="Land M.L."/>
            <person name="Kyrpides N.C."/>
            <person name="Woyke T."/>
        </authorList>
    </citation>
    <scope>NUCLEOTIDE SEQUENCE [LARGE SCALE GENOMIC DNA]</scope>
    <source>
        <strain>ATCC 29413 / PCC 7937</strain>
    </source>
</reference>
<feature type="chain" id="PRO_0000230161" description="Putative regulatory protein Ava_1474">
    <location>
        <begin position="1"/>
        <end position="88"/>
    </location>
</feature>
<organism>
    <name type="scientific">Trichormus variabilis (strain ATCC 29413 / PCC 7937)</name>
    <name type="common">Anabaena variabilis</name>
    <dbReference type="NCBI Taxonomy" id="240292"/>
    <lineage>
        <taxon>Bacteria</taxon>
        <taxon>Bacillati</taxon>
        <taxon>Cyanobacteriota</taxon>
        <taxon>Cyanophyceae</taxon>
        <taxon>Nostocales</taxon>
        <taxon>Nostocaceae</taxon>
        <taxon>Trichormus</taxon>
    </lineage>
</organism>
<dbReference type="EMBL" id="CP000117">
    <property type="protein sequence ID" value="ABA21097.1"/>
    <property type="molecule type" value="Genomic_DNA"/>
</dbReference>
<dbReference type="SMR" id="Q3MD39"/>
<dbReference type="STRING" id="240292.Ava_1474"/>
<dbReference type="KEGG" id="ava:Ava_1474"/>
<dbReference type="eggNOG" id="COG2052">
    <property type="taxonomic scope" value="Bacteria"/>
</dbReference>
<dbReference type="HOGENOM" id="CLU_165326_0_0_3"/>
<dbReference type="Proteomes" id="UP000002533">
    <property type="component" value="Chromosome"/>
</dbReference>
<dbReference type="HAMAP" id="MF_01503">
    <property type="entry name" value="RemA"/>
    <property type="match status" value="1"/>
</dbReference>
<dbReference type="InterPro" id="IPR007169">
    <property type="entry name" value="RemA-like"/>
</dbReference>
<dbReference type="NCBIfam" id="NF046064">
    <property type="entry name" value="MtxBflmRegRemA"/>
    <property type="match status" value="1"/>
</dbReference>
<dbReference type="NCBIfam" id="NF003315">
    <property type="entry name" value="PRK04323.1"/>
    <property type="match status" value="1"/>
</dbReference>
<dbReference type="PANTHER" id="PTHR38449:SF1">
    <property type="entry name" value="REGULATORY PROTEIN SSL2874-RELATED"/>
    <property type="match status" value="1"/>
</dbReference>
<dbReference type="PANTHER" id="PTHR38449">
    <property type="entry name" value="REGULATORY PROTEIN TM_1690-RELATED"/>
    <property type="match status" value="1"/>
</dbReference>
<dbReference type="Pfam" id="PF04025">
    <property type="entry name" value="RemA-like"/>
    <property type="match status" value="1"/>
</dbReference>
<proteinExistence type="inferred from homology"/>
<accession>Q3MD39</accession>
<sequence length="88" mass="9739">MEIQLINIGFGNIVSANRVVAIVSPESAPIKRIITDARDKNQLIDATYGRRTRAVIITDSSHVILSAIQPETVANRFVISREHQSVEN</sequence>
<evidence type="ECO:0000255" key="1">
    <source>
        <dbReference type="HAMAP-Rule" id="MF_01503"/>
    </source>
</evidence>
<comment type="similarity">
    <text evidence="1">Belongs to the RemA family.</text>
</comment>
<protein>
    <recommendedName>
        <fullName evidence="1">Putative regulatory protein Ava_1474</fullName>
    </recommendedName>
</protein>
<gene>
    <name type="ordered locus">Ava_1474</name>
</gene>
<name>Y1474_TRIV2</name>